<sequence length="79" mass="9204">MAQQRRGGFKRRKKVDYIAANKIEYVDYKDTELLSRFVSERGKILPRRVTGTSAKNQRKVTTAIKRARVMALMPFVNED</sequence>
<comment type="function">
    <text evidence="1">Binds as a heterodimer with protein bS6 to the central domain of the 16S rRNA, where it helps stabilize the platform of the 30S subunit.</text>
</comment>
<comment type="subunit">
    <text evidence="1">Part of the 30S ribosomal subunit. Forms a tight heterodimer with protein bS6.</text>
</comment>
<comment type="similarity">
    <text evidence="1">Belongs to the bacterial ribosomal protein bS18 family.</text>
</comment>
<feature type="chain" id="PRO_1000003633" description="Small ribosomal subunit protein bS18">
    <location>
        <begin position="1"/>
        <end position="79"/>
    </location>
</feature>
<evidence type="ECO:0000255" key="1">
    <source>
        <dbReference type="HAMAP-Rule" id="MF_00270"/>
    </source>
</evidence>
<evidence type="ECO:0000305" key="2"/>
<proteinExistence type="inferred from homology"/>
<dbReference type="EMBL" id="CP000387">
    <property type="protein sequence ID" value="ABN43889.1"/>
    <property type="molecule type" value="Genomic_DNA"/>
</dbReference>
<dbReference type="RefSeq" id="WP_000068664.1">
    <property type="nucleotide sequence ID" value="NZ_CAXTYR010000003.1"/>
</dbReference>
<dbReference type="RefSeq" id="YP_001034439.1">
    <property type="nucleotide sequence ID" value="NC_009009.1"/>
</dbReference>
<dbReference type="SMR" id="A3CL34"/>
<dbReference type="STRING" id="388919.SSA_0440"/>
<dbReference type="GeneID" id="93963800"/>
<dbReference type="KEGG" id="ssa:SSA_0440"/>
<dbReference type="PATRIC" id="fig|388919.9.peg.425"/>
<dbReference type="eggNOG" id="COG0238">
    <property type="taxonomic scope" value="Bacteria"/>
</dbReference>
<dbReference type="HOGENOM" id="CLU_148710_2_2_9"/>
<dbReference type="OrthoDB" id="9812008at2"/>
<dbReference type="PRO" id="PR:A3CL34"/>
<dbReference type="Proteomes" id="UP000002148">
    <property type="component" value="Chromosome"/>
</dbReference>
<dbReference type="GO" id="GO:0022627">
    <property type="term" value="C:cytosolic small ribosomal subunit"/>
    <property type="evidence" value="ECO:0007669"/>
    <property type="project" value="TreeGrafter"/>
</dbReference>
<dbReference type="GO" id="GO:0070181">
    <property type="term" value="F:small ribosomal subunit rRNA binding"/>
    <property type="evidence" value="ECO:0007669"/>
    <property type="project" value="TreeGrafter"/>
</dbReference>
<dbReference type="GO" id="GO:0003735">
    <property type="term" value="F:structural constituent of ribosome"/>
    <property type="evidence" value="ECO:0007669"/>
    <property type="project" value="InterPro"/>
</dbReference>
<dbReference type="GO" id="GO:0006412">
    <property type="term" value="P:translation"/>
    <property type="evidence" value="ECO:0007669"/>
    <property type="project" value="UniProtKB-UniRule"/>
</dbReference>
<dbReference type="FunFam" id="4.10.640.10:FF:000003">
    <property type="entry name" value="30S ribosomal protein S18"/>
    <property type="match status" value="1"/>
</dbReference>
<dbReference type="Gene3D" id="4.10.640.10">
    <property type="entry name" value="Ribosomal protein S18"/>
    <property type="match status" value="1"/>
</dbReference>
<dbReference type="HAMAP" id="MF_00270">
    <property type="entry name" value="Ribosomal_bS18"/>
    <property type="match status" value="1"/>
</dbReference>
<dbReference type="InterPro" id="IPR001648">
    <property type="entry name" value="Ribosomal_bS18"/>
</dbReference>
<dbReference type="InterPro" id="IPR018275">
    <property type="entry name" value="Ribosomal_bS18_CS"/>
</dbReference>
<dbReference type="InterPro" id="IPR036870">
    <property type="entry name" value="Ribosomal_bS18_sf"/>
</dbReference>
<dbReference type="NCBIfam" id="TIGR00165">
    <property type="entry name" value="S18"/>
    <property type="match status" value="1"/>
</dbReference>
<dbReference type="PANTHER" id="PTHR13479">
    <property type="entry name" value="30S RIBOSOMAL PROTEIN S18"/>
    <property type="match status" value="1"/>
</dbReference>
<dbReference type="PANTHER" id="PTHR13479:SF40">
    <property type="entry name" value="SMALL RIBOSOMAL SUBUNIT PROTEIN BS18M"/>
    <property type="match status" value="1"/>
</dbReference>
<dbReference type="Pfam" id="PF01084">
    <property type="entry name" value="Ribosomal_S18"/>
    <property type="match status" value="1"/>
</dbReference>
<dbReference type="PRINTS" id="PR00974">
    <property type="entry name" value="RIBOSOMALS18"/>
</dbReference>
<dbReference type="SUPFAM" id="SSF46911">
    <property type="entry name" value="Ribosomal protein S18"/>
    <property type="match status" value="1"/>
</dbReference>
<dbReference type="PROSITE" id="PS00057">
    <property type="entry name" value="RIBOSOMAL_S18"/>
    <property type="match status" value="1"/>
</dbReference>
<organism>
    <name type="scientific">Streptococcus sanguinis (strain SK36)</name>
    <dbReference type="NCBI Taxonomy" id="388919"/>
    <lineage>
        <taxon>Bacteria</taxon>
        <taxon>Bacillati</taxon>
        <taxon>Bacillota</taxon>
        <taxon>Bacilli</taxon>
        <taxon>Lactobacillales</taxon>
        <taxon>Streptococcaceae</taxon>
        <taxon>Streptococcus</taxon>
    </lineage>
</organism>
<reference key="1">
    <citation type="journal article" date="2007" name="J. Bacteriol.">
        <title>Genome of the opportunistic pathogen Streptococcus sanguinis.</title>
        <authorList>
            <person name="Xu P."/>
            <person name="Alves J.M."/>
            <person name="Kitten T."/>
            <person name="Brown A."/>
            <person name="Chen Z."/>
            <person name="Ozaki L.S."/>
            <person name="Manque P."/>
            <person name="Ge X."/>
            <person name="Serrano M.G."/>
            <person name="Puiu D."/>
            <person name="Hendricks S."/>
            <person name="Wang Y."/>
            <person name="Chaplin M.D."/>
            <person name="Akan D."/>
            <person name="Paik S."/>
            <person name="Peterson D.L."/>
            <person name="Macrina F.L."/>
            <person name="Buck G.A."/>
        </authorList>
    </citation>
    <scope>NUCLEOTIDE SEQUENCE [LARGE SCALE GENOMIC DNA]</scope>
    <source>
        <strain>SK36</strain>
    </source>
</reference>
<accession>A3CL34</accession>
<protein>
    <recommendedName>
        <fullName evidence="1">Small ribosomal subunit protein bS18</fullName>
    </recommendedName>
    <alternativeName>
        <fullName evidence="2">30S ribosomal protein S18</fullName>
    </alternativeName>
</protein>
<name>RS18_STRSV</name>
<keyword id="KW-1185">Reference proteome</keyword>
<keyword id="KW-0687">Ribonucleoprotein</keyword>
<keyword id="KW-0689">Ribosomal protein</keyword>
<keyword id="KW-0694">RNA-binding</keyword>
<keyword id="KW-0699">rRNA-binding</keyword>
<gene>
    <name evidence="1" type="primary">rpsR</name>
    <name type="ordered locus">SSA_0440</name>
</gene>